<feature type="chain" id="PRO_0000234493" description="Coiled-coil domain-containing protein 39">
    <location>
        <begin position="1"/>
        <end position="941"/>
    </location>
</feature>
<feature type="region of interest" description="Disordered" evidence="4">
    <location>
        <begin position="868"/>
        <end position="941"/>
    </location>
</feature>
<feature type="coiled-coil region" evidence="3">
    <location>
        <begin position="16"/>
        <end position="122"/>
    </location>
</feature>
<feature type="coiled-coil region" evidence="3">
    <location>
        <begin position="164"/>
        <end position="273"/>
    </location>
</feature>
<feature type="coiled-coil region" evidence="3">
    <location>
        <begin position="306"/>
        <end position="605"/>
    </location>
</feature>
<feature type="coiled-coil region" evidence="3">
    <location>
        <begin position="665"/>
        <end position="825"/>
    </location>
</feature>
<feature type="compositionally biased region" description="Low complexity" evidence="4">
    <location>
        <begin position="871"/>
        <end position="903"/>
    </location>
</feature>
<feature type="compositionally biased region" description="Low complexity" evidence="4">
    <location>
        <begin position="914"/>
        <end position="934"/>
    </location>
</feature>
<feature type="modified residue" description="Phosphoserine" evidence="2">
    <location>
        <position position="892"/>
    </location>
</feature>
<feature type="modified residue" description="Phosphoserine" evidence="2">
    <location>
        <position position="900"/>
    </location>
</feature>
<feature type="splice variant" id="VSP_037014" description="In isoform 2." evidence="11">
    <original>M</original>
    <variation>MEYIFPNTGVLWSWLINILCNRRIVWFTSSQLPRGPPASSGGHSFHTLRERSESRLFVESYAAAWQPPGTSGGASCCSSLSAQVM</variation>
    <location>
        <position position="1"/>
    </location>
</feature>
<feature type="splice variant" id="VSP_037015" description="In isoform 2." evidence="11">
    <original>AAQEK</original>
    <variation>VMSMS</variation>
    <location>
        <begin position="667"/>
        <end position="671"/>
    </location>
</feature>
<feature type="splice variant" id="VSP_037016" description="In isoform 2." evidence="11">
    <location>
        <begin position="672"/>
        <end position="941"/>
    </location>
</feature>
<feature type="sequence variant" id="VAR_072468" description="In CILD14; uncertain significance; dbSNP:rs140505857." evidence="7">
    <original>T</original>
    <variation>I</variation>
    <location>
        <position position="594"/>
    </location>
</feature>
<feature type="sequence conflict" description="In Ref. 1; BAG65133." evidence="12" ref="1">
    <original>Y</original>
    <variation>H</variation>
    <location>
        <position position="452"/>
    </location>
</feature>
<feature type="sequence conflict" description="In Ref. 1; BAG65133." evidence="12" ref="1">
    <original>R</original>
    <variation>H</variation>
    <location>
        <position position="811"/>
    </location>
</feature>
<dbReference type="EMBL" id="AK304270">
    <property type="protein sequence ID" value="BAG65133.1"/>
    <property type="molecule type" value="mRNA"/>
</dbReference>
<dbReference type="EMBL" id="AL122120">
    <property type="protein sequence ID" value="CAB59277.1"/>
    <property type="molecule type" value="mRNA"/>
</dbReference>
<dbReference type="EMBL" id="AC068298">
    <property type="status" value="NOT_ANNOTATED_CDS"/>
    <property type="molecule type" value="Genomic_DNA"/>
</dbReference>
<dbReference type="CCDS" id="CCDS46964.1">
    <molecule id="Q9UFE4-1"/>
</dbReference>
<dbReference type="PIR" id="T34567">
    <property type="entry name" value="T34567"/>
</dbReference>
<dbReference type="RefSeq" id="NP_852091.1">
    <molecule id="Q9UFE4-1"/>
    <property type="nucleotide sequence ID" value="NM_181426.2"/>
</dbReference>
<dbReference type="PDB" id="8J07">
    <property type="method" value="EM"/>
    <property type="resolution" value="4.10 A"/>
    <property type="chains" value="h1/h2=1-941"/>
</dbReference>
<dbReference type="PDBsum" id="8J07"/>
<dbReference type="EMDB" id="EMD-35888"/>
<dbReference type="SMR" id="Q9UFE4"/>
<dbReference type="BioGRID" id="130945">
    <property type="interactions" value="12"/>
</dbReference>
<dbReference type="FunCoup" id="Q9UFE4">
    <property type="interactions" value="98"/>
</dbReference>
<dbReference type="IntAct" id="Q9UFE4">
    <property type="interactions" value="5"/>
</dbReference>
<dbReference type="STRING" id="9606.ENSP00000417960"/>
<dbReference type="GlyGen" id="Q9UFE4">
    <property type="glycosylation" value="3 sites, 1 O-linked glycan (3 sites)"/>
</dbReference>
<dbReference type="iPTMnet" id="Q9UFE4"/>
<dbReference type="PhosphoSitePlus" id="Q9UFE4"/>
<dbReference type="BioMuta" id="CCDC39"/>
<dbReference type="DMDM" id="296439421"/>
<dbReference type="MassIVE" id="Q9UFE4"/>
<dbReference type="PaxDb" id="9606-ENSP00000405708"/>
<dbReference type="PeptideAtlas" id="Q9UFE4"/>
<dbReference type="ProteomicsDB" id="84179">
    <molecule id="Q9UFE4-1"/>
</dbReference>
<dbReference type="ProteomicsDB" id="84180">
    <molecule id="Q9UFE4-2"/>
</dbReference>
<dbReference type="Antibodypedia" id="79042">
    <property type="antibodies" value="105 antibodies from 15 providers"/>
</dbReference>
<dbReference type="DNASU" id="339829"/>
<dbReference type="Ensembl" id="ENST00000476379.6">
    <molecule id="Q9UFE4-1"/>
    <property type="protein sequence ID" value="ENSP00000417960.2"/>
    <property type="gene ID" value="ENSG00000284862.3"/>
</dbReference>
<dbReference type="GeneID" id="339829"/>
<dbReference type="KEGG" id="hsa:339829"/>
<dbReference type="MANE-Select" id="ENST00000476379.6">
    <property type="protein sequence ID" value="ENSP00000417960.2"/>
    <property type="RefSeq nucleotide sequence ID" value="NM_181426.2"/>
    <property type="RefSeq protein sequence ID" value="NP_852091.1"/>
</dbReference>
<dbReference type="UCSC" id="uc010hxe.4">
    <molecule id="Q9UFE4-1"/>
    <property type="organism name" value="human"/>
</dbReference>
<dbReference type="AGR" id="HGNC:25244"/>
<dbReference type="CTD" id="339829"/>
<dbReference type="DisGeNET" id="339829"/>
<dbReference type="GeneCards" id="CCDC39"/>
<dbReference type="GeneReviews" id="CCDC39"/>
<dbReference type="HGNC" id="HGNC:25244">
    <property type="gene designation" value="CCDC39"/>
</dbReference>
<dbReference type="HPA" id="ENSG00000284862">
    <property type="expression patterns" value="Tissue enhanced (lymphoid tissue, retina)"/>
</dbReference>
<dbReference type="MalaCards" id="CCDC39"/>
<dbReference type="MIM" id="613798">
    <property type="type" value="gene"/>
</dbReference>
<dbReference type="MIM" id="613807">
    <property type="type" value="phenotype"/>
</dbReference>
<dbReference type="neXtProt" id="NX_Q9UFE4"/>
<dbReference type="Orphanet" id="244">
    <property type="disease" value="Primary ciliary dyskinesia"/>
</dbReference>
<dbReference type="PharmGKB" id="PA142672194"/>
<dbReference type="VEuPathDB" id="HostDB:ENSG00000284862"/>
<dbReference type="eggNOG" id="ENOG502QS0D">
    <property type="taxonomic scope" value="Eukaryota"/>
</dbReference>
<dbReference type="GeneTree" id="ENSGT00390000015010"/>
<dbReference type="HOGENOM" id="CLU_009793_2_0_1"/>
<dbReference type="InParanoid" id="Q9UFE4"/>
<dbReference type="OMA" id="NSKNCDE"/>
<dbReference type="OrthoDB" id="10259720at2759"/>
<dbReference type="PAN-GO" id="Q9UFE4">
    <property type="GO annotations" value="4 GO annotations based on evolutionary models"/>
</dbReference>
<dbReference type="PhylomeDB" id="Q9UFE4"/>
<dbReference type="TreeFam" id="TF329312"/>
<dbReference type="PathwayCommons" id="Q9UFE4"/>
<dbReference type="SignaLink" id="Q9UFE4"/>
<dbReference type="BioGRID-ORCS" id="339829">
    <property type="hits" value="10 hits in 1143 CRISPR screens"/>
</dbReference>
<dbReference type="ChiTaRS" id="CCDC39">
    <property type="organism name" value="human"/>
</dbReference>
<dbReference type="GenomeRNAi" id="339829"/>
<dbReference type="Pharos" id="Q9UFE4">
    <property type="development level" value="Tbio"/>
</dbReference>
<dbReference type="PRO" id="PR:Q9UFE4"/>
<dbReference type="Proteomes" id="UP000005640">
    <property type="component" value="Chromosome 3"/>
</dbReference>
<dbReference type="RNAct" id="Q9UFE4">
    <property type="molecule type" value="protein"/>
</dbReference>
<dbReference type="Bgee" id="ENSG00000284862">
    <property type="expression patterns" value="Expressed in right uterine tube and 94 other cell types or tissues"/>
</dbReference>
<dbReference type="ExpressionAtlas" id="Q9UFE4">
    <property type="expression patterns" value="baseline and differential"/>
</dbReference>
<dbReference type="GO" id="GO:0005930">
    <property type="term" value="C:axoneme"/>
    <property type="evidence" value="ECO:0000314"/>
    <property type="project" value="UniProtKB"/>
</dbReference>
<dbReference type="GO" id="GO:0005929">
    <property type="term" value="C:cilium"/>
    <property type="evidence" value="ECO:0000314"/>
    <property type="project" value="UniProtKB"/>
</dbReference>
<dbReference type="GO" id="GO:0005829">
    <property type="term" value="C:cytosol"/>
    <property type="evidence" value="ECO:0007669"/>
    <property type="project" value="Ensembl"/>
</dbReference>
<dbReference type="GO" id="GO:0005576">
    <property type="term" value="C:extracellular region"/>
    <property type="evidence" value="ECO:0007669"/>
    <property type="project" value="GOC"/>
</dbReference>
<dbReference type="GO" id="GO:0070286">
    <property type="term" value="P:axonemal dynein complex assembly"/>
    <property type="evidence" value="ECO:0000315"/>
    <property type="project" value="UniProtKB"/>
</dbReference>
<dbReference type="GO" id="GO:0022010">
    <property type="term" value="P:central nervous system myelination"/>
    <property type="evidence" value="ECO:0007669"/>
    <property type="project" value="Ensembl"/>
</dbReference>
<dbReference type="GO" id="GO:0021987">
    <property type="term" value="P:cerebral cortex development"/>
    <property type="evidence" value="ECO:0007669"/>
    <property type="project" value="Ensembl"/>
</dbReference>
<dbReference type="GO" id="GO:0090660">
    <property type="term" value="P:cerebrospinal fluid circulation"/>
    <property type="evidence" value="ECO:0007669"/>
    <property type="project" value="Ensembl"/>
</dbReference>
<dbReference type="GO" id="GO:0003341">
    <property type="term" value="P:cilium movement"/>
    <property type="evidence" value="ECO:0000315"/>
    <property type="project" value="SYSCILIA_CCNET"/>
</dbReference>
<dbReference type="GO" id="GO:0060285">
    <property type="term" value="P:cilium-dependent cell motility"/>
    <property type="evidence" value="ECO:0000315"/>
    <property type="project" value="UniProtKB"/>
</dbReference>
<dbReference type="GO" id="GO:0071907">
    <property type="term" value="P:determination of digestive tract left/right asymmetry"/>
    <property type="evidence" value="ECO:0000315"/>
    <property type="project" value="BHF-UCL"/>
</dbReference>
<dbReference type="GO" id="GO:0071910">
    <property type="term" value="P:determination of liver left/right asymmetry"/>
    <property type="evidence" value="ECO:0000315"/>
    <property type="project" value="BHF-UCL"/>
</dbReference>
<dbReference type="GO" id="GO:0035469">
    <property type="term" value="P:determination of pancreatic left/right asymmetry"/>
    <property type="evidence" value="ECO:0000315"/>
    <property type="project" value="BHF-UCL"/>
</dbReference>
<dbReference type="GO" id="GO:0060287">
    <property type="term" value="P:epithelial cilium movement involved in determination of left/right asymmetry"/>
    <property type="evidence" value="ECO:0000315"/>
    <property type="project" value="UniProtKB"/>
</dbReference>
<dbReference type="GO" id="GO:0061966">
    <property type="term" value="P:establishment of left/right asymmetry"/>
    <property type="evidence" value="ECO:0007669"/>
    <property type="project" value="Ensembl"/>
</dbReference>
<dbReference type="GO" id="GO:0051649">
    <property type="term" value="P:establishment of localization in cell"/>
    <property type="evidence" value="ECO:0007669"/>
    <property type="project" value="Ensembl"/>
</dbReference>
<dbReference type="GO" id="GO:0030317">
    <property type="term" value="P:flagellated sperm motility"/>
    <property type="evidence" value="ECO:0000315"/>
    <property type="project" value="SYSCILIA_CCNET"/>
</dbReference>
<dbReference type="GO" id="GO:0001947">
    <property type="term" value="P:heart looping"/>
    <property type="evidence" value="ECO:0000315"/>
    <property type="project" value="BHF-UCL"/>
</dbReference>
<dbReference type="GO" id="GO:0036159">
    <property type="term" value="P:inner dynein arm assembly"/>
    <property type="evidence" value="ECO:0000315"/>
    <property type="project" value="SYSCILIA_CCNET"/>
</dbReference>
<dbReference type="GO" id="GO:0040011">
    <property type="term" value="P:locomotion"/>
    <property type="evidence" value="ECO:0007669"/>
    <property type="project" value="Ensembl"/>
</dbReference>
<dbReference type="GO" id="GO:0030324">
    <property type="term" value="P:lung development"/>
    <property type="evidence" value="ECO:0000315"/>
    <property type="project" value="BHF-UCL"/>
</dbReference>
<dbReference type="GO" id="GO:0014004">
    <property type="term" value="P:microglia differentiation"/>
    <property type="evidence" value="ECO:0007669"/>
    <property type="project" value="Ensembl"/>
</dbReference>
<dbReference type="GO" id="GO:0044458">
    <property type="term" value="P:motile cilium assembly"/>
    <property type="evidence" value="ECO:0000315"/>
    <property type="project" value="SYSCILIA_CCNET"/>
</dbReference>
<dbReference type="GO" id="GO:0150076">
    <property type="term" value="P:neuroinflammatory response"/>
    <property type="evidence" value="ECO:0007669"/>
    <property type="project" value="Ensembl"/>
</dbReference>
<dbReference type="GO" id="GO:0042551">
    <property type="term" value="P:neuron maturation"/>
    <property type="evidence" value="ECO:0007669"/>
    <property type="project" value="Ensembl"/>
</dbReference>
<dbReference type="GO" id="GO:0048812">
    <property type="term" value="P:neuron projection morphogenesis"/>
    <property type="evidence" value="ECO:0007669"/>
    <property type="project" value="Ensembl"/>
</dbReference>
<dbReference type="GO" id="GO:0061512">
    <property type="term" value="P:protein localization to cilium"/>
    <property type="evidence" value="ECO:0007669"/>
    <property type="project" value="Ensembl"/>
</dbReference>
<dbReference type="GO" id="GO:0003356">
    <property type="term" value="P:regulation of cilium beat frequency"/>
    <property type="evidence" value="ECO:0000315"/>
    <property type="project" value="SYSCILIA_CCNET"/>
</dbReference>
<dbReference type="GO" id="GO:0060074">
    <property type="term" value="P:synapse maturation"/>
    <property type="evidence" value="ECO:0007669"/>
    <property type="project" value="Ensembl"/>
</dbReference>
<dbReference type="InterPro" id="IPR033290">
    <property type="entry name" value="CCDC39"/>
</dbReference>
<dbReference type="PANTHER" id="PTHR18962">
    <property type="entry name" value="COILED-COIL DOMAIN-CONTAINING PROTEIN 39"/>
    <property type="match status" value="1"/>
</dbReference>
<dbReference type="PANTHER" id="PTHR18962:SF0">
    <property type="entry name" value="COILED-COIL DOMAIN-CONTAINING PROTEIN 39"/>
    <property type="match status" value="1"/>
</dbReference>
<dbReference type="Pfam" id="PF24161">
    <property type="entry name" value="CCDC39"/>
    <property type="match status" value="1"/>
</dbReference>
<sequence>MSSEFLAELHWEDGFAIPVANEENKLLEDQLSKLKDERASLQDELREYEERINSMTSHFKNVKQELSITQSLCKARERETESEEHFKAIAQRELGRVKDEIQRLENEMASILEKKSDKENGIFKATQKLDGLKCQMNWDQQALEAWLEESAHKDSDALTLQKYAQQDDNKIRALTLQLERLTLECNQKRKILDNELTETISAQLELDKAAQDFRKIHNERQELIKQWENTIEQMQKRDGDIDNCALELARIKQETREKENLVKEKIKFLESEIGNNTEFEKRISVADRKLLKCRTAYQDHETSRIQLKGELDSLKATVNRTSSDLEALRKNISKIKKDIHEETARLQKTKNHNEIIQTKLKEITEKTMSVEEKATNLEDMLKEEEKDVKEVDVQLNLIKGVLFKKAQELQTETMKEKAVLSEIEGTRSSLKHLNHQLQKLDFETLKQQEIMYSQDFHIQQVERRMSRLKGEINSEEKQALEAKIVELRKSLEEKKSTCGLLETQIKKLHNDLYFIKKAHSKNSDEKQSLMTKINELNLFIDRSEKELDKAKGFKQDLMIEDNLLKLEVKRTREMLHSKAEEVLSLEKRKQQLYTAMEERTEEIKVHKTMLASQIRYVDQERENISTEFRERLSKIEKLKNRYEILTVVMLPPEGEEEKTQAYYVIKAAQEKEELQREGDCLDAKINKAEKEIYALENTLQVLNSCNNNYKQSFKKVTPSSDEYELKIQLEEQKRAVDEKYRYKQRQIRELQEDIQSMENTLDVIEHLANNVKEKLSEKQAYSFQLSKETEEQKPKLERVTKQCAKLTKEIRLLKDTKDETMEEQDIKLREMKQFHKVIDEMLVDIIEENTEIRIILQTYFQQSGLELPTASTKGSRQSSRSPSHTSLSARSSRSTSTSTSQSSIKVLELKFPASSSLVGSPSRPSSASSSSSNVKSKKSSK</sequence>
<protein>
    <recommendedName>
        <fullName evidence="12">Coiled-coil domain-containing protein 39</fullName>
    </recommendedName>
</protein>
<comment type="function">
    <text evidence="1 5">Required for assembly of dynein regulatory complex (DRC) and inner dynein arm (IDA) complexes, which are responsible for ciliary beat regulation, thereby playing a central role in motility in cilia and flagella (PubMed:21131972). Probably acts together with CCDC40 to form a molecular ruler that determines the 96 nanometer (nm) repeat length and arrangements of components in cilia and flagella (By similarity). Not required for outer dynein arm complexes assembly (PubMed:21131972).</text>
</comment>
<comment type="subcellular location">
    <subcellularLocation>
        <location evidence="5 6 10">Cytoplasm</location>
        <location evidence="5 6 10">Cytoskeleton</location>
        <location evidence="5 6 10">Cilium axoneme</location>
    </subcellularLocation>
    <text evidence="6">CCDC40 is required for localization to axonemes.</text>
</comment>
<comment type="alternative products">
    <event type="alternative splicing"/>
    <isoform>
        <id>Q9UFE4-1</id>
        <name>1</name>
        <sequence type="displayed"/>
    </isoform>
    <isoform>
        <id>Q9UFE4-2</id>
        <name>2</name>
        <sequence type="described" ref="VSP_037014 VSP_037015 VSP_037016"/>
    </isoform>
</comment>
<comment type="tissue specificity">
    <text evidence="5">Mainly expressed in nasal brushings and, to a lesser extent, in lungs and testis.</text>
</comment>
<comment type="disease" evidence="5 7 8 9">
    <disease id="DI-03024">
        <name>Ciliary dyskinesia, primary, 14</name>
        <acronym>CILD14</acronym>
        <description>A disorder characterized by abnormalities of motile cilia. Respiratory infections leading to chronic inflammation and bronchiectasis are recurrent, due to defects in the respiratory cilia; reduced fertility is often observed in male patients due to abnormalities of sperm tails. Half of the patients exhibit randomization of left-right body asymmetry and situs inversus, due to dysfunction of monocilia at the embryonic node. Primary ciliary dyskinesia associated with situs inversus is referred to as Kartagener syndrome.</description>
        <dbReference type="MIM" id="613807"/>
    </disease>
    <text evidence="7 8">The disease is caused by variants affecting the gene represented in this entry. The disease is characterized by primary ciliary dyskinesia with inner dynein arm (IDA) defects and axonemal dizorganisation: defects in CCDC39 and CCDC40 constitute the major cause of this phenotype.</text>
</comment>
<comment type="miscellaneous">
    <molecule>Isoform 2</molecule>
    <text evidence="12">May be produced at very low levels due to a premature stop codon in the mRNA, leading to nonsense-mediated mRNA decay.</text>
</comment>
<comment type="similarity">
    <text evidence="12">Belongs to the CCDC39 family.</text>
</comment>
<accession>Q9UFE4</accession>
<accession>B4E2H1</accession>
<reference key="1">
    <citation type="journal article" date="2004" name="Nat. Genet.">
        <title>Complete sequencing and characterization of 21,243 full-length human cDNAs.</title>
        <authorList>
            <person name="Ota T."/>
            <person name="Suzuki Y."/>
            <person name="Nishikawa T."/>
            <person name="Otsuki T."/>
            <person name="Sugiyama T."/>
            <person name="Irie R."/>
            <person name="Wakamatsu A."/>
            <person name="Hayashi K."/>
            <person name="Sato H."/>
            <person name="Nagai K."/>
            <person name="Kimura K."/>
            <person name="Makita H."/>
            <person name="Sekine M."/>
            <person name="Obayashi M."/>
            <person name="Nishi T."/>
            <person name="Shibahara T."/>
            <person name="Tanaka T."/>
            <person name="Ishii S."/>
            <person name="Yamamoto J."/>
            <person name="Saito K."/>
            <person name="Kawai Y."/>
            <person name="Isono Y."/>
            <person name="Nakamura Y."/>
            <person name="Nagahari K."/>
            <person name="Murakami K."/>
            <person name="Yasuda T."/>
            <person name="Iwayanagi T."/>
            <person name="Wagatsuma M."/>
            <person name="Shiratori A."/>
            <person name="Sudo H."/>
            <person name="Hosoiri T."/>
            <person name="Kaku Y."/>
            <person name="Kodaira H."/>
            <person name="Kondo H."/>
            <person name="Sugawara M."/>
            <person name="Takahashi M."/>
            <person name="Kanda K."/>
            <person name="Yokoi T."/>
            <person name="Furuya T."/>
            <person name="Kikkawa E."/>
            <person name="Omura Y."/>
            <person name="Abe K."/>
            <person name="Kamihara K."/>
            <person name="Katsuta N."/>
            <person name="Sato K."/>
            <person name="Tanikawa M."/>
            <person name="Yamazaki M."/>
            <person name="Ninomiya K."/>
            <person name="Ishibashi T."/>
            <person name="Yamashita H."/>
            <person name="Murakawa K."/>
            <person name="Fujimori K."/>
            <person name="Tanai H."/>
            <person name="Kimata M."/>
            <person name="Watanabe M."/>
            <person name="Hiraoka S."/>
            <person name="Chiba Y."/>
            <person name="Ishida S."/>
            <person name="Ono Y."/>
            <person name="Takiguchi S."/>
            <person name="Watanabe S."/>
            <person name="Yosida M."/>
            <person name="Hotuta T."/>
            <person name="Kusano J."/>
            <person name="Kanehori K."/>
            <person name="Takahashi-Fujii A."/>
            <person name="Hara H."/>
            <person name="Tanase T.-O."/>
            <person name="Nomura Y."/>
            <person name="Togiya S."/>
            <person name="Komai F."/>
            <person name="Hara R."/>
            <person name="Takeuchi K."/>
            <person name="Arita M."/>
            <person name="Imose N."/>
            <person name="Musashino K."/>
            <person name="Yuuki H."/>
            <person name="Oshima A."/>
            <person name="Sasaki N."/>
            <person name="Aotsuka S."/>
            <person name="Yoshikawa Y."/>
            <person name="Matsunawa H."/>
            <person name="Ichihara T."/>
            <person name="Shiohata N."/>
            <person name="Sano S."/>
            <person name="Moriya S."/>
            <person name="Momiyama H."/>
            <person name="Satoh N."/>
            <person name="Takami S."/>
            <person name="Terashima Y."/>
            <person name="Suzuki O."/>
            <person name="Nakagawa S."/>
            <person name="Senoh A."/>
            <person name="Mizoguchi H."/>
            <person name="Goto Y."/>
            <person name="Shimizu F."/>
            <person name="Wakebe H."/>
            <person name="Hishigaki H."/>
            <person name="Watanabe T."/>
            <person name="Sugiyama A."/>
            <person name="Takemoto M."/>
            <person name="Kawakami B."/>
            <person name="Yamazaki M."/>
            <person name="Watanabe K."/>
            <person name="Kumagai A."/>
            <person name="Itakura S."/>
            <person name="Fukuzumi Y."/>
            <person name="Fujimori Y."/>
            <person name="Komiyama M."/>
            <person name="Tashiro H."/>
            <person name="Tanigami A."/>
            <person name="Fujiwara T."/>
            <person name="Ono T."/>
            <person name="Yamada K."/>
            <person name="Fujii Y."/>
            <person name="Ozaki K."/>
            <person name="Hirao M."/>
            <person name="Ohmori Y."/>
            <person name="Kawabata A."/>
            <person name="Hikiji T."/>
            <person name="Kobatake N."/>
            <person name="Inagaki H."/>
            <person name="Ikema Y."/>
            <person name="Okamoto S."/>
            <person name="Okitani R."/>
            <person name="Kawakami T."/>
            <person name="Noguchi S."/>
            <person name="Itoh T."/>
            <person name="Shigeta K."/>
            <person name="Senba T."/>
            <person name="Matsumura K."/>
            <person name="Nakajima Y."/>
            <person name="Mizuno T."/>
            <person name="Morinaga M."/>
            <person name="Sasaki M."/>
            <person name="Togashi T."/>
            <person name="Oyama M."/>
            <person name="Hata H."/>
            <person name="Watanabe M."/>
            <person name="Komatsu T."/>
            <person name="Mizushima-Sugano J."/>
            <person name="Satoh T."/>
            <person name="Shirai Y."/>
            <person name="Takahashi Y."/>
            <person name="Nakagawa K."/>
            <person name="Okumura K."/>
            <person name="Nagase T."/>
            <person name="Nomura N."/>
            <person name="Kikuchi H."/>
            <person name="Masuho Y."/>
            <person name="Yamashita R."/>
            <person name="Nakai K."/>
            <person name="Yada T."/>
            <person name="Nakamura Y."/>
            <person name="Ohara O."/>
            <person name="Isogai T."/>
            <person name="Sugano S."/>
        </authorList>
    </citation>
    <scope>NUCLEOTIDE SEQUENCE [LARGE SCALE MRNA] (ISOFORM 1)</scope>
    <source>
        <tissue>Trachea</tissue>
    </source>
</reference>
<reference key="2">
    <citation type="journal article" date="2007" name="BMC Genomics">
        <title>The full-ORF clone resource of the German cDNA consortium.</title>
        <authorList>
            <person name="Bechtel S."/>
            <person name="Rosenfelder H."/>
            <person name="Duda A."/>
            <person name="Schmidt C.P."/>
            <person name="Ernst U."/>
            <person name="Wellenreuther R."/>
            <person name="Mehrle A."/>
            <person name="Schuster C."/>
            <person name="Bahr A."/>
            <person name="Bloecker H."/>
            <person name="Heubner D."/>
            <person name="Hoerlein A."/>
            <person name="Michel G."/>
            <person name="Wedler H."/>
            <person name="Koehrer K."/>
            <person name="Ottenwaelder B."/>
            <person name="Poustka A."/>
            <person name="Wiemann S."/>
            <person name="Schupp I."/>
        </authorList>
    </citation>
    <scope>NUCLEOTIDE SEQUENCE [LARGE SCALE MRNA] (ISOFORM 2)</scope>
    <source>
        <tissue>Testis</tissue>
    </source>
</reference>
<reference key="3">
    <citation type="journal article" date="2006" name="Nature">
        <title>The DNA sequence, annotation and analysis of human chromosome 3.</title>
        <authorList>
            <person name="Muzny D.M."/>
            <person name="Scherer S.E."/>
            <person name="Kaul R."/>
            <person name="Wang J."/>
            <person name="Yu J."/>
            <person name="Sudbrak R."/>
            <person name="Buhay C.J."/>
            <person name="Chen R."/>
            <person name="Cree A."/>
            <person name="Ding Y."/>
            <person name="Dugan-Rocha S."/>
            <person name="Gill R."/>
            <person name="Gunaratne P."/>
            <person name="Harris R.A."/>
            <person name="Hawes A.C."/>
            <person name="Hernandez J."/>
            <person name="Hodgson A.V."/>
            <person name="Hume J."/>
            <person name="Jackson A."/>
            <person name="Khan Z.M."/>
            <person name="Kovar-Smith C."/>
            <person name="Lewis L.R."/>
            <person name="Lozado R.J."/>
            <person name="Metzker M.L."/>
            <person name="Milosavljevic A."/>
            <person name="Miner G.R."/>
            <person name="Morgan M.B."/>
            <person name="Nazareth L.V."/>
            <person name="Scott G."/>
            <person name="Sodergren E."/>
            <person name="Song X.-Z."/>
            <person name="Steffen D."/>
            <person name="Wei S."/>
            <person name="Wheeler D.A."/>
            <person name="Wright M.W."/>
            <person name="Worley K.C."/>
            <person name="Yuan Y."/>
            <person name="Zhang Z."/>
            <person name="Adams C.Q."/>
            <person name="Ansari-Lari M.A."/>
            <person name="Ayele M."/>
            <person name="Brown M.J."/>
            <person name="Chen G."/>
            <person name="Chen Z."/>
            <person name="Clendenning J."/>
            <person name="Clerc-Blankenburg K.P."/>
            <person name="Chen R."/>
            <person name="Chen Z."/>
            <person name="Davis C."/>
            <person name="Delgado O."/>
            <person name="Dinh H.H."/>
            <person name="Dong W."/>
            <person name="Draper H."/>
            <person name="Ernst S."/>
            <person name="Fu G."/>
            <person name="Gonzalez-Garay M.L."/>
            <person name="Garcia D.K."/>
            <person name="Gillett W."/>
            <person name="Gu J."/>
            <person name="Hao B."/>
            <person name="Haugen E."/>
            <person name="Havlak P."/>
            <person name="He X."/>
            <person name="Hennig S."/>
            <person name="Hu S."/>
            <person name="Huang W."/>
            <person name="Jackson L.R."/>
            <person name="Jacob L.S."/>
            <person name="Kelly S.H."/>
            <person name="Kube M."/>
            <person name="Levy R."/>
            <person name="Li Z."/>
            <person name="Liu B."/>
            <person name="Liu J."/>
            <person name="Liu W."/>
            <person name="Lu J."/>
            <person name="Maheshwari M."/>
            <person name="Nguyen B.-V."/>
            <person name="Okwuonu G.O."/>
            <person name="Palmeiri A."/>
            <person name="Pasternak S."/>
            <person name="Perez L.M."/>
            <person name="Phelps K.A."/>
            <person name="Plopper F.J."/>
            <person name="Qiang B."/>
            <person name="Raymond C."/>
            <person name="Rodriguez R."/>
            <person name="Saenphimmachak C."/>
            <person name="Santibanez J."/>
            <person name="Shen H."/>
            <person name="Shen Y."/>
            <person name="Subramanian S."/>
            <person name="Tabor P.E."/>
            <person name="Verduzco D."/>
            <person name="Waldron L."/>
            <person name="Wang J."/>
            <person name="Wang J."/>
            <person name="Wang Q."/>
            <person name="Williams G.A."/>
            <person name="Wong G.K.-S."/>
            <person name="Yao Z."/>
            <person name="Zhang J."/>
            <person name="Zhang X."/>
            <person name="Zhao G."/>
            <person name="Zhou J."/>
            <person name="Zhou Y."/>
            <person name="Nelson D."/>
            <person name="Lehrach H."/>
            <person name="Reinhardt R."/>
            <person name="Naylor S.L."/>
            <person name="Yang H."/>
            <person name="Olson M."/>
            <person name="Weinstock G."/>
            <person name="Gibbs R.A."/>
        </authorList>
    </citation>
    <scope>NUCLEOTIDE SEQUENCE [LARGE SCALE GENOMIC DNA]</scope>
</reference>
<reference key="4">
    <citation type="journal article" date="2011" name="Nat. Genet.">
        <title>CCDC39 is required for assembly of inner dynein arms and the dynein regulatory complex and for normal ciliary motility in humans and dogs.</title>
        <authorList>
            <person name="Merveille A.C."/>
            <person name="Davis E.E."/>
            <person name="Becker-Heck A."/>
            <person name="Legendre M."/>
            <person name="Amirav I."/>
            <person name="Bataille G."/>
            <person name="Belmont J."/>
            <person name="Beydon N."/>
            <person name="Billen F."/>
            <person name="Clement A."/>
            <person name="Clercx C."/>
            <person name="Coste A."/>
            <person name="Crosbie R."/>
            <person name="de Blic J."/>
            <person name="Deleuze S."/>
            <person name="Duquesnoy P."/>
            <person name="Escalier D."/>
            <person name="Escudier E."/>
            <person name="Fliegauf M."/>
            <person name="Horvath J."/>
            <person name="Hill K."/>
            <person name="Jorissen M."/>
            <person name="Just J."/>
            <person name="Kispert A."/>
            <person name="Lathrop M."/>
            <person name="Loges N.T."/>
            <person name="Marthin J.K."/>
            <person name="Momozawa Y."/>
            <person name="Montantin G."/>
            <person name="Nielsen K.G."/>
            <person name="Olbrich H."/>
            <person name="Papon J.F."/>
            <person name="Rayet I."/>
            <person name="Roger G."/>
            <person name="Schmidts M."/>
            <person name="Tenreiro H."/>
            <person name="Towbin J.A."/>
            <person name="Zelenika D."/>
            <person name="Zentgraf H."/>
            <person name="Georges M."/>
            <person name="Lequarre A.S."/>
            <person name="Katsanis N."/>
            <person name="Omran H."/>
            <person name="Amselem S."/>
        </authorList>
    </citation>
    <scope>FUNCTION</scope>
    <scope>SUBCELLULAR LOCATION</scope>
    <scope>INVOLVEMENT IN CILD14</scope>
    <scope>TISSUE SPECIFICITY</scope>
</reference>
<reference key="5">
    <citation type="journal article" date="2011" name="Nat. Genet.">
        <title>The coiled-coil domain containing protein CCDC40 is essential for motile cilia function and left-right axis formation.</title>
        <authorList>
            <person name="Becker-Heck A."/>
            <person name="Zohn I.E."/>
            <person name="Okabe N."/>
            <person name="Pollock A."/>
            <person name="Lenhart K.B."/>
            <person name="Sullivan-Brown J."/>
            <person name="McSheene J."/>
            <person name="Loges N.T."/>
            <person name="Olbrich H."/>
            <person name="Haeffner K."/>
            <person name="Fliegauf M."/>
            <person name="Horvath J."/>
            <person name="Reinhardt R."/>
            <person name="Nielsen K.G."/>
            <person name="Marthin J.K."/>
            <person name="Baktai G."/>
            <person name="Anderson K.V."/>
            <person name="Geisler R."/>
            <person name="Niswander L."/>
            <person name="Omran H."/>
            <person name="Burdine R.D."/>
        </authorList>
    </citation>
    <scope>SUBCELLULAR LOCATION</scope>
</reference>
<reference key="6">
    <citation type="journal article" date="2012" name="J. Med. Genet.">
        <title>Delineation of CCDC39/CCDC40 mutation spectrum and associated phenotypes in primary ciliary dyskinesia.</title>
        <authorList>
            <person name="Blanchon S."/>
            <person name="Legendre M."/>
            <person name="Copin B."/>
            <person name="Duquesnoy P."/>
            <person name="Montantin G."/>
            <person name="Kott E."/>
            <person name="Dastot F."/>
            <person name="Jeanson L."/>
            <person name="Cachanado M."/>
            <person name="Rousseau A."/>
            <person name="Papon J.F."/>
            <person name="Beydon N."/>
            <person name="Brouard J."/>
            <person name="Crestani B."/>
            <person name="Deschildre A."/>
            <person name="Desir J."/>
            <person name="Dollfus H."/>
            <person name="Leheup B."/>
            <person name="Tamalet A."/>
            <person name="Thumerelle C."/>
            <person name="Vojtek A.M."/>
            <person name="Escalier D."/>
            <person name="Coste A."/>
            <person name="de Blic J."/>
            <person name="Clement A."/>
            <person name="Escudier E."/>
            <person name="Amselem S."/>
        </authorList>
    </citation>
    <scope>INVOLVEMENT IN CILD14</scope>
    <scope>VARIANT CILD14 ILE-594</scope>
</reference>
<reference key="7">
    <citation type="journal article" date="2013" name="Hum. Mutat.">
        <title>Mutations in CCDC39 and CCDC40 are the major cause of primary ciliary dyskinesia with axonemal disorganization and absent inner dynein arms.</title>
        <authorList>
            <person name="Antony D."/>
            <person name="Becker-Heck A."/>
            <person name="Zariwala M.A."/>
            <person name="Schmidts M."/>
            <person name="Onoufriadis A."/>
            <person name="Forouhan M."/>
            <person name="Wilson R."/>
            <person name="Taylor-Cox T."/>
            <person name="Dewar A."/>
            <person name="Jackson C."/>
            <person name="Goggin P."/>
            <person name="Loges N.T."/>
            <person name="Olbrich H."/>
            <person name="Jaspers M."/>
            <person name="Jorissen M."/>
            <person name="Leigh M.W."/>
            <person name="Wolf W.E."/>
            <person name="Daniels M.L."/>
            <person name="Noone P.G."/>
            <person name="Ferkol T.W."/>
            <person name="Sagel S.D."/>
            <person name="Rosenfeld M."/>
            <person name="Rutman A."/>
            <person name="Dixit A."/>
            <person name="O'Callaghan C."/>
            <person name="Lucas J.S."/>
            <person name="Hogg C."/>
            <person name="Scambler P.J."/>
            <person name="Emes R.D."/>
            <person name="Chung E.M."/>
            <person name="Shoemark A."/>
            <person name="Knowles M.R."/>
            <person name="Omran H."/>
            <person name="Mitchison H.M."/>
            <person name="Al-Turki S."/>
            <person name="Anderson C."/>
            <person name="Antony D."/>
            <person name="Barroso I."/>
            <person name="Beales P."/>
            <person name="Bentham J."/>
            <person name="Bertolini S."/>
            <person name="Bhattacharya S."/>
            <person name="Calandra S."/>
            <person name="Carss K."/>
            <person name="Chatterjee K."/>
            <person name="Cirak S."/>
            <person name="Cosgrove C."/>
            <person name="Daly A."/>
            <person name="Danecek P."/>
            <person name="Durbin R."/>
            <person name="Fitzpatrick D."/>
            <person name="Floyd J."/>
            <person name="Foley R."/>
            <person name="Franklin C."/>
            <person name="Futema M."/>
            <person name="Graham C."/>
            <person name="Humphries S."/>
            <person name="Hurles M."/>
            <person name="Joyce C."/>
            <person name="Leitersdorf E."/>
            <person name="McCarthy S."/>
            <person name="Mitchison H.M."/>
            <person name="Muddyman D."/>
            <person name="Muntoni F."/>
            <person name="Neil A."/>
            <person name="O'Rahilly S."/>
            <person name="Onoufriadis A."/>
            <person name="Parker V."/>
            <person name="Payne F."/>
            <person name="Plagnol V."/>
            <person name="Raymond L."/>
            <person name="Savage D.B."/>
            <person name="Scambler P."/>
            <person name="Schmidts M."/>
            <person name="Schoenmakers N."/>
            <person name="Seed M."/>
            <person name="Semple R."/>
            <person name="Serra E."/>
            <person name="Stalker J."/>
            <person name="Van Bockxmeer F."/>
            <person name="van Kogelenberg M."/>
            <person name="Vijayarangakannan P."/>
            <person name="Walter K."/>
            <person name="Whittall R."/>
            <person name="Williamson K."/>
        </authorList>
    </citation>
    <scope>INVOLVEMENT IN CILD14</scope>
</reference>
<reference key="8">
    <citation type="journal article" date="2014" name="Eur. Respir. J.">
        <title>Ciliary beat pattern and frequency in genetic variants of primary ciliary dyskinesia.</title>
        <authorList>
            <person name="Raidt J."/>
            <person name="Wallmeier J."/>
            <person name="Hjeij R."/>
            <person name="Onnebrink J.G."/>
            <person name="Pennekamp P."/>
            <person name="Loges N.T."/>
            <person name="Olbrich H."/>
            <person name="Haeffner K."/>
            <person name="Dougherty G.W."/>
            <person name="Omran H."/>
            <person name="Werner C."/>
        </authorList>
    </citation>
    <scope>INVOLVEMENT IN CILD14</scope>
</reference>
<reference key="9">
    <citation type="journal article" date="2016" name="Hum. Mutat.">
        <title>Mutations in GAS8, a gene encoding a nexin-dynein regulatory complex subunit, cause primary ciliary dyskinesia with axonemal disorganization.</title>
        <authorList>
            <person name="Jeanson L."/>
            <person name="Thomas L."/>
            <person name="Copin B."/>
            <person name="Coste A."/>
            <person name="Sermet-Gaudelus I."/>
            <person name="Dastot-Le Moal F."/>
            <person name="Duquesnoy P."/>
            <person name="Montantin G."/>
            <person name="Collot N."/>
            <person name="Tissier S."/>
            <person name="Papon J.F."/>
            <person name="Clement A."/>
            <person name="Louis B."/>
            <person name="Escudier E."/>
            <person name="Amselem S."/>
            <person name="Legendre M."/>
        </authorList>
    </citation>
    <scope>SUBCELLULAR LOCATION</scope>
</reference>
<keyword id="KW-0002">3D-structure</keyword>
<keyword id="KW-0025">Alternative splicing</keyword>
<keyword id="KW-0966">Cell projection</keyword>
<keyword id="KW-1186">Ciliopathy</keyword>
<keyword id="KW-0969">Cilium</keyword>
<keyword id="KW-0175">Coiled coil</keyword>
<keyword id="KW-0963">Cytoplasm</keyword>
<keyword id="KW-0206">Cytoskeleton</keyword>
<keyword id="KW-1012">Kartagener syndrome</keyword>
<keyword id="KW-0597">Phosphoprotein</keyword>
<keyword id="KW-0990">Primary ciliary dyskinesia</keyword>
<keyword id="KW-1267">Proteomics identification</keyword>
<keyword id="KW-1185">Reference proteome</keyword>
<evidence type="ECO:0000250" key="1">
    <source>
        <dbReference type="UniProtKB" id="A8IQT2"/>
    </source>
</evidence>
<evidence type="ECO:0000250" key="2">
    <source>
        <dbReference type="UniProtKB" id="Q9D5Y1"/>
    </source>
</evidence>
<evidence type="ECO:0000255" key="3"/>
<evidence type="ECO:0000256" key="4">
    <source>
        <dbReference type="SAM" id="MobiDB-lite"/>
    </source>
</evidence>
<evidence type="ECO:0000269" key="5">
    <source>
    </source>
</evidence>
<evidence type="ECO:0000269" key="6">
    <source>
    </source>
</evidence>
<evidence type="ECO:0000269" key="7">
    <source>
    </source>
</evidence>
<evidence type="ECO:0000269" key="8">
    <source>
    </source>
</evidence>
<evidence type="ECO:0000269" key="9">
    <source>
    </source>
</evidence>
<evidence type="ECO:0000269" key="10">
    <source>
    </source>
</evidence>
<evidence type="ECO:0000303" key="11">
    <source>
    </source>
</evidence>
<evidence type="ECO:0000305" key="12"/>
<evidence type="ECO:0000312" key="13">
    <source>
        <dbReference type="HGNC" id="HGNC:25244"/>
    </source>
</evidence>
<name>CCD39_HUMAN</name>
<organism>
    <name type="scientific">Homo sapiens</name>
    <name type="common">Human</name>
    <dbReference type="NCBI Taxonomy" id="9606"/>
    <lineage>
        <taxon>Eukaryota</taxon>
        <taxon>Metazoa</taxon>
        <taxon>Chordata</taxon>
        <taxon>Craniata</taxon>
        <taxon>Vertebrata</taxon>
        <taxon>Euteleostomi</taxon>
        <taxon>Mammalia</taxon>
        <taxon>Eutheria</taxon>
        <taxon>Euarchontoglires</taxon>
        <taxon>Primates</taxon>
        <taxon>Haplorrhini</taxon>
        <taxon>Catarrhini</taxon>
        <taxon>Hominidae</taxon>
        <taxon>Homo</taxon>
    </lineage>
</organism>
<gene>
    <name evidence="13" type="primary">CCDC39</name>
</gene>
<proteinExistence type="evidence at protein level"/>